<name>RAB4B_MOUSE</name>
<feature type="initiator methionine" description="Removed" evidence="3">
    <location>
        <position position="1"/>
    </location>
</feature>
<feature type="chain" id="PRO_0000121100" description="Ras-related protein Rab-4B">
    <location>
        <begin position="2"/>
        <end position="213"/>
    </location>
</feature>
<feature type="short sequence motif" description="Switch 1" evidence="4">
    <location>
        <begin position="39"/>
        <end position="44"/>
    </location>
</feature>
<feature type="short sequence motif" description="Switch 2" evidence="4">
    <location>
        <begin position="65"/>
        <end position="74"/>
    </location>
</feature>
<feature type="binding site" evidence="3">
    <location>
        <position position="18"/>
    </location>
    <ligand>
        <name>GDP</name>
        <dbReference type="ChEBI" id="CHEBI:58189"/>
    </ligand>
</feature>
<feature type="binding site" evidence="2">
    <location>
        <position position="18"/>
    </location>
    <ligand>
        <name>GTP</name>
        <dbReference type="ChEBI" id="CHEBI:37565"/>
    </ligand>
</feature>
<feature type="binding site" evidence="3">
    <location>
        <position position="19"/>
    </location>
    <ligand>
        <name>GDP</name>
        <dbReference type="ChEBI" id="CHEBI:58189"/>
    </ligand>
</feature>
<feature type="binding site" evidence="2">
    <location>
        <position position="19"/>
    </location>
    <ligand>
        <name>GTP</name>
        <dbReference type="ChEBI" id="CHEBI:37565"/>
    </ligand>
</feature>
<feature type="binding site" evidence="3">
    <location>
        <position position="20"/>
    </location>
    <ligand>
        <name>GDP</name>
        <dbReference type="ChEBI" id="CHEBI:58189"/>
    </ligand>
</feature>
<feature type="binding site" evidence="2">
    <location>
        <position position="20"/>
    </location>
    <ligand>
        <name>GTP</name>
        <dbReference type="ChEBI" id="CHEBI:37565"/>
    </ligand>
</feature>
<feature type="binding site" evidence="3">
    <location>
        <position position="21"/>
    </location>
    <ligand>
        <name>GDP</name>
        <dbReference type="ChEBI" id="CHEBI:58189"/>
    </ligand>
</feature>
<feature type="binding site" evidence="2">
    <location>
        <position position="21"/>
    </location>
    <ligand>
        <name>GTP</name>
        <dbReference type="ChEBI" id="CHEBI:37565"/>
    </ligand>
</feature>
<feature type="binding site" evidence="3">
    <location>
        <position position="22"/>
    </location>
    <ligand>
        <name>GDP</name>
        <dbReference type="ChEBI" id="CHEBI:58189"/>
    </ligand>
</feature>
<feature type="binding site" evidence="2">
    <location>
        <position position="22"/>
    </location>
    <ligand>
        <name>GTP</name>
        <dbReference type="ChEBI" id="CHEBI:37565"/>
    </ligand>
</feature>
<feature type="binding site" evidence="3">
    <location>
        <position position="22"/>
    </location>
    <ligand>
        <name>Mg(2+)</name>
        <dbReference type="ChEBI" id="CHEBI:18420"/>
    </ligand>
</feature>
<feature type="binding site" evidence="3">
    <location>
        <position position="23"/>
    </location>
    <ligand>
        <name>GDP</name>
        <dbReference type="ChEBI" id="CHEBI:58189"/>
    </ligand>
</feature>
<feature type="binding site" evidence="2">
    <location>
        <position position="23"/>
    </location>
    <ligand>
        <name>GTP</name>
        <dbReference type="ChEBI" id="CHEBI:37565"/>
    </ligand>
</feature>
<feature type="binding site" evidence="2">
    <location>
        <position position="37"/>
    </location>
    <ligand>
        <name>GTP</name>
        <dbReference type="ChEBI" id="CHEBI:37565"/>
    </ligand>
</feature>
<feature type="binding site" evidence="2">
    <location>
        <position position="39"/>
    </location>
    <ligand>
        <name>GTP</name>
        <dbReference type="ChEBI" id="CHEBI:37565"/>
    </ligand>
</feature>
<feature type="binding site" evidence="2">
    <location>
        <position position="40"/>
    </location>
    <ligand>
        <name>GTP</name>
        <dbReference type="ChEBI" id="CHEBI:37565"/>
    </ligand>
</feature>
<feature type="binding site" evidence="2">
    <location>
        <position position="40"/>
    </location>
    <ligand>
        <name>Mg(2+)</name>
        <dbReference type="ChEBI" id="CHEBI:18420"/>
    </ligand>
</feature>
<feature type="binding site" evidence="3">
    <location>
        <position position="63"/>
    </location>
    <ligand>
        <name>Mg(2+)</name>
        <dbReference type="ChEBI" id="CHEBI:18420"/>
    </ligand>
</feature>
<feature type="binding site" evidence="2">
    <location>
        <position position="66"/>
    </location>
    <ligand>
        <name>GTP</name>
        <dbReference type="ChEBI" id="CHEBI:37565"/>
    </ligand>
</feature>
<feature type="binding site" evidence="3">
    <location>
        <position position="121"/>
    </location>
    <ligand>
        <name>GDP</name>
        <dbReference type="ChEBI" id="CHEBI:58189"/>
    </ligand>
</feature>
<feature type="binding site" evidence="2">
    <location>
        <position position="121"/>
    </location>
    <ligand>
        <name>GTP</name>
        <dbReference type="ChEBI" id="CHEBI:37565"/>
    </ligand>
</feature>
<feature type="binding site" evidence="3">
    <location>
        <position position="122"/>
    </location>
    <ligand>
        <name>GDP</name>
        <dbReference type="ChEBI" id="CHEBI:58189"/>
    </ligand>
</feature>
<feature type="binding site" evidence="2">
    <location>
        <position position="122"/>
    </location>
    <ligand>
        <name>GTP</name>
        <dbReference type="ChEBI" id="CHEBI:37565"/>
    </ligand>
</feature>
<feature type="binding site" evidence="3">
    <location>
        <position position="124"/>
    </location>
    <ligand>
        <name>GDP</name>
        <dbReference type="ChEBI" id="CHEBI:58189"/>
    </ligand>
</feature>
<feature type="binding site" evidence="2">
    <location>
        <position position="124"/>
    </location>
    <ligand>
        <name>GTP</name>
        <dbReference type="ChEBI" id="CHEBI:37565"/>
    </ligand>
</feature>
<feature type="binding site" evidence="3">
    <location>
        <position position="152"/>
    </location>
    <ligand>
        <name>GDP</name>
        <dbReference type="ChEBI" id="CHEBI:58189"/>
    </ligand>
</feature>
<feature type="binding site" evidence="2">
    <location>
        <position position="152"/>
    </location>
    <ligand>
        <name>GTP</name>
        <dbReference type="ChEBI" id="CHEBI:37565"/>
    </ligand>
</feature>
<feature type="binding site" evidence="3">
    <location>
        <position position="153"/>
    </location>
    <ligand>
        <name>GDP</name>
        <dbReference type="ChEBI" id="CHEBI:58189"/>
    </ligand>
</feature>
<feature type="binding site" evidence="2">
    <location>
        <position position="153"/>
    </location>
    <ligand>
        <name>GTP</name>
        <dbReference type="ChEBI" id="CHEBI:37565"/>
    </ligand>
</feature>
<feature type="modified residue" description="N-acetylalanine" evidence="3">
    <location>
        <position position="2"/>
    </location>
</feature>
<feature type="modified residue" description="5-glutamyl serotonin" evidence="7">
    <location>
        <position position="67"/>
    </location>
</feature>
<feature type="modified residue" description="Phosphoserine" evidence="2">
    <location>
        <position position="185"/>
    </location>
</feature>
<feature type="modified residue" description="Phosphoserine" evidence="3">
    <location>
        <position position="193"/>
    </location>
</feature>
<feature type="modified residue" description="Cysteine methyl ester" evidence="1">
    <location>
        <position position="213"/>
    </location>
</feature>
<feature type="lipid moiety-binding region" description="S-geranylgeranyl cysteine" evidence="1">
    <location>
        <position position="211"/>
    </location>
</feature>
<feature type="lipid moiety-binding region" description="S-geranylgeranyl cysteine" evidence="1">
    <location>
        <position position="213"/>
    </location>
</feature>
<feature type="sequence conflict" description="In Ref. 1; AAL11725." evidence="6" ref="1">
    <original>D</original>
    <variation>G</variation>
    <location>
        <position position="174"/>
    </location>
</feature>
<feature type="sequence conflict" description="In Ref. 1; AAL11725." evidence="6" ref="1">
    <original>QP</original>
    <variation>HA</variation>
    <location>
        <begin position="199"/>
        <end position="200"/>
    </location>
</feature>
<dbReference type="EC" id="3.6.5.2" evidence="2"/>
<dbReference type="EMBL" id="AF408432">
    <property type="protein sequence ID" value="AAL11725.1"/>
    <property type="molecule type" value="mRNA"/>
</dbReference>
<dbReference type="EMBL" id="AK005314">
    <property type="protein sequence ID" value="BAB23948.1"/>
    <property type="molecule type" value="mRNA"/>
</dbReference>
<dbReference type="EMBL" id="BC007147">
    <property type="protein sequence ID" value="AAH07147.1"/>
    <property type="molecule type" value="mRNA"/>
</dbReference>
<dbReference type="CCDS" id="CCDS21012.1"/>
<dbReference type="RefSeq" id="NP_083667.1">
    <property type="nucleotide sequence ID" value="NM_029391.2"/>
</dbReference>
<dbReference type="SMR" id="Q91ZR1"/>
<dbReference type="BioGRID" id="202547">
    <property type="interactions" value="2"/>
</dbReference>
<dbReference type="FunCoup" id="Q91ZR1">
    <property type="interactions" value="1845"/>
</dbReference>
<dbReference type="IntAct" id="Q91ZR1">
    <property type="interactions" value="33"/>
</dbReference>
<dbReference type="STRING" id="10090.ENSMUSP00000090727"/>
<dbReference type="GlyGen" id="Q91ZR1">
    <property type="glycosylation" value="2 sites, 1 N-linked glycan (1 site), 1 O-linked glycan (1 site)"/>
</dbReference>
<dbReference type="iPTMnet" id="Q91ZR1"/>
<dbReference type="PhosphoSitePlus" id="Q91ZR1"/>
<dbReference type="jPOST" id="Q91ZR1"/>
<dbReference type="PaxDb" id="10090-ENSMUSP00000090727"/>
<dbReference type="ProteomicsDB" id="300227"/>
<dbReference type="Pumba" id="Q91ZR1"/>
<dbReference type="DNASU" id="19342"/>
<dbReference type="Ensembl" id="ENSMUST00000093040.13">
    <property type="protein sequence ID" value="ENSMUSP00000090727.7"/>
    <property type="gene ID" value="ENSMUSG00000053291.16"/>
</dbReference>
<dbReference type="GeneID" id="19342"/>
<dbReference type="KEGG" id="mmu:19342"/>
<dbReference type="UCSC" id="uc009fvc.1">
    <property type="organism name" value="mouse"/>
</dbReference>
<dbReference type="AGR" id="MGI:105071"/>
<dbReference type="CTD" id="53916"/>
<dbReference type="MGI" id="MGI:105071">
    <property type="gene designation" value="Rab4b"/>
</dbReference>
<dbReference type="VEuPathDB" id="HostDB:ENSMUSG00000053291"/>
<dbReference type="eggNOG" id="KOG0086">
    <property type="taxonomic scope" value="Eukaryota"/>
</dbReference>
<dbReference type="GeneTree" id="ENSGT00940000159399"/>
<dbReference type="HOGENOM" id="CLU_041217_23_1_1"/>
<dbReference type="InParanoid" id="Q91ZR1"/>
<dbReference type="OMA" id="ASQNICI"/>
<dbReference type="OrthoDB" id="9989112at2759"/>
<dbReference type="PhylomeDB" id="Q91ZR1"/>
<dbReference type="TreeFam" id="TF300032"/>
<dbReference type="Reactome" id="R-MMU-6798695">
    <property type="pathway name" value="Neutrophil degranulation"/>
</dbReference>
<dbReference type="Reactome" id="R-MMU-8873719">
    <property type="pathway name" value="RAB geranylgeranylation"/>
</dbReference>
<dbReference type="Reactome" id="R-MMU-8875656">
    <property type="pathway name" value="MET receptor recycling"/>
</dbReference>
<dbReference type="BioGRID-ORCS" id="19342">
    <property type="hits" value="1 hit in 75 CRISPR screens"/>
</dbReference>
<dbReference type="ChiTaRS" id="Rab4b">
    <property type="organism name" value="mouse"/>
</dbReference>
<dbReference type="PRO" id="PR:Q91ZR1"/>
<dbReference type="Proteomes" id="UP000000589">
    <property type="component" value="Chromosome 7"/>
</dbReference>
<dbReference type="RNAct" id="Q91ZR1">
    <property type="molecule type" value="protein"/>
</dbReference>
<dbReference type="Bgee" id="ENSMUSG00000053291">
    <property type="expression patterns" value="Expressed in granulocyte and 74 other cell types or tissues"/>
</dbReference>
<dbReference type="ExpressionAtlas" id="Q91ZR1">
    <property type="expression patterns" value="baseline and differential"/>
</dbReference>
<dbReference type="GO" id="GO:0005829">
    <property type="term" value="C:cytosol"/>
    <property type="evidence" value="ECO:0007669"/>
    <property type="project" value="GOC"/>
</dbReference>
<dbReference type="GO" id="GO:0031901">
    <property type="term" value="C:early endosome membrane"/>
    <property type="evidence" value="ECO:0007669"/>
    <property type="project" value="UniProtKB-SubCell"/>
</dbReference>
<dbReference type="GO" id="GO:0032593">
    <property type="term" value="C:insulin-responsive compartment"/>
    <property type="evidence" value="ECO:0007669"/>
    <property type="project" value="Ensembl"/>
</dbReference>
<dbReference type="GO" id="GO:0005739">
    <property type="term" value="C:mitochondrion"/>
    <property type="evidence" value="ECO:0007005"/>
    <property type="project" value="MGI"/>
</dbReference>
<dbReference type="GO" id="GO:0048471">
    <property type="term" value="C:perinuclear region of cytoplasm"/>
    <property type="evidence" value="ECO:0007669"/>
    <property type="project" value="Ensembl"/>
</dbReference>
<dbReference type="GO" id="GO:0005886">
    <property type="term" value="C:plasma membrane"/>
    <property type="evidence" value="ECO:0007669"/>
    <property type="project" value="UniProtKB-SubCell"/>
</dbReference>
<dbReference type="GO" id="GO:0055037">
    <property type="term" value="C:recycling endosome"/>
    <property type="evidence" value="ECO:0007669"/>
    <property type="project" value="Ensembl"/>
</dbReference>
<dbReference type="GO" id="GO:0003925">
    <property type="term" value="F:G protein activity"/>
    <property type="evidence" value="ECO:0007669"/>
    <property type="project" value="UniProtKB-EC"/>
</dbReference>
<dbReference type="GO" id="GO:0005525">
    <property type="term" value="F:GTP binding"/>
    <property type="evidence" value="ECO:0007669"/>
    <property type="project" value="UniProtKB-KW"/>
</dbReference>
<dbReference type="GO" id="GO:0046323">
    <property type="term" value="P:D-glucose import"/>
    <property type="evidence" value="ECO:0007669"/>
    <property type="project" value="Ensembl"/>
</dbReference>
<dbReference type="GO" id="GO:0034498">
    <property type="term" value="P:early endosome to Golgi transport"/>
    <property type="evidence" value="ECO:0007669"/>
    <property type="project" value="Ensembl"/>
</dbReference>
<dbReference type="GO" id="GO:0034058">
    <property type="term" value="P:endosomal vesicle fusion"/>
    <property type="evidence" value="ECO:0007669"/>
    <property type="project" value="Ensembl"/>
</dbReference>
<dbReference type="GO" id="GO:0015031">
    <property type="term" value="P:protein transport"/>
    <property type="evidence" value="ECO:0007669"/>
    <property type="project" value="UniProtKB-KW"/>
</dbReference>
<dbReference type="GO" id="GO:0032482">
    <property type="term" value="P:Rab protein signal transduction"/>
    <property type="evidence" value="ECO:0007669"/>
    <property type="project" value="InterPro"/>
</dbReference>
<dbReference type="CDD" id="cd04113">
    <property type="entry name" value="Rab4"/>
    <property type="match status" value="1"/>
</dbReference>
<dbReference type="FunFam" id="3.40.50.300:FF:000280">
    <property type="entry name" value="Putative ras-related protein Rab-4B"/>
    <property type="match status" value="1"/>
</dbReference>
<dbReference type="Gene3D" id="3.40.50.300">
    <property type="entry name" value="P-loop containing nucleotide triphosphate hydrolases"/>
    <property type="match status" value="1"/>
</dbReference>
<dbReference type="InterPro" id="IPR027417">
    <property type="entry name" value="P-loop_NTPase"/>
</dbReference>
<dbReference type="InterPro" id="IPR041819">
    <property type="entry name" value="Rab4"/>
</dbReference>
<dbReference type="InterPro" id="IPR050209">
    <property type="entry name" value="Rab_GTPases_membrane_traffic"/>
</dbReference>
<dbReference type="InterPro" id="IPR005225">
    <property type="entry name" value="Small_GTP-bd"/>
</dbReference>
<dbReference type="InterPro" id="IPR001806">
    <property type="entry name" value="Small_GTPase"/>
</dbReference>
<dbReference type="NCBIfam" id="TIGR00231">
    <property type="entry name" value="small_GTP"/>
    <property type="match status" value="1"/>
</dbReference>
<dbReference type="PANTHER" id="PTHR47979">
    <property type="entry name" value="DRAB11-RELATED"/>
    <property type="match status" value="1"/>
</dbReference>
<dbReference type="Pfam" id="PF00071">
    <property type="entry name" value="Ras"/>
    <property type="match status" value="1"/>
</dbReference>
<dbReference type="PRINTS" id="PR00449">
    <property type="entry name" value="RASTRNSFRMNG"/>
</dbReference>
<dbReference type="SMART" id="SM00175">
    <property type="entry name" value="RAB"/>
    <property type="match status" value="1"/>
</dbReference>
<dbReference type="SMART" id="SM00176">
    <property type="entry name" value="RAN"/>
    <property type="match status" value="1"/>
</dbReference>
<dbReference type="SMART" id="SM00173">
    <property type="entry name" value="RAS"/>
    <property type="match status" value="1"/>
</dbReference>
<dbReference type="SMART" id="SM00174">
    <property type="entry name" value="RHO"/>
    <property type="match status" value="1"/>
</dbReference>
<dbReference type="SUPFAM" id="SSF52540">
    <property type="entry name" value="P-loop containing nucleoside triphosphate hydrolases"/>
    <property type="match status" value="1"/>
</dbReference>
<dbReference type="PROSITE" id="PS51419">
    <property type="entry name" value="RAB"/>
    <property type="match status" value="1"/>
</dbReference>
<sequence length="213" mass="23629">MAETYDFLFKFLVIGSAGTGKSCLLHQFIENKFKQDSNHTIGVEFGSRVVNVGGKTVKLQIWDTAGQERFRSVTRSYYRGAAGALLVYDITSRETYNSLAAWLTDARTLASPNIVVILCGNKKDLDPEREVTFLEASRFAQENELMFLETSALTGENVEEAFLKCARTILNKIDSGELDPERMGSGIQYGDISLRQLRQPRSAQAVAPQPCGC</sequence>
<gene>
    <name evidence="8" type="primary">Rab4b</name>
    <name type="synonym">Rab4</name>
</gene>
<evidence type="ECO:0000250" key="1"/>
<evidence type="ECO:0000250" key="2">
    <source>
        <dbReference type="UniProtKB" id="P20338"/>
    </source>
</evidence>
<evidence type="ECO:0000250" key="3">
    <source>
        <dbReference type="UniProtKB" id="P61018"/>
    </source>
</evidence>
<evidence type="ECO:0000250" key="4">
    <source>
        <dbReference type="UniProtKB" id="P61106"/>
    </source>
</evidence>
<evidence type="ECO:0000269" key="5">
    <source>
    </source>
</evidence>
<evidence type="ECO:0000305" key="6"/>
<evidence type="ECO:0000305" key="7">
    <source>
    </source>
</evidence>
<evidence type="ECO:0000312" key="8">
    <source>
        <dbReference type="MGI" id="MGI:105071"/>
    </source>
</evidence>
<protein>
    <recommendedName>
        <fullName>Ras-related protein Rab-4B</fullName>
        <ecNumber evidence="2">3.6.5.2</ecNumber>
    </recommendedName>
</protein>
<keyword id="KW-0007">Acetylation</keyword>
<keyword id="KW-1003">Cell membrane</keyword>
<keyword id="KW-0967">Endosome</keyword>
<keyword id="KW-0342">GTP-binding</keyword>
<keyword id="KW-0378">Hydrolase</keyword>
<keyword id="KW-0449">Lipoprotein</keyword>
<keyword id="KW-0460">Magnesium</keyword>
<keyword id="KW-0472">Membrane</keyword>
<keyword id="KW-0479">Metal-binding</keyword>
<keyword id="KW-0488">Methylation</keyword>
<keyword id="KW-0547">Nucleotide-binding</keyword>
<keyword id="KW-0597">Phosphoprotein</keyword>
<keyword id="KW-0636">Prenylation</keyword>
<keyword id="KW-0653">Protein transport</keyword>
<keyword id="KW-1185">Reference proteome</keyword>
<keyword id="KW-0813">Transport</keyword>
<organism>
    <name type="scientific">Mus musculus</name>
    <name type="common">Mouse</name>
    <dbReference type="NCBI Taxonomy" id="10090"/>
    <lineage>
        <taxon>Eukaryota</taxon>
        <taxon>Metazoa</taxon>
        <taxon>Chordata</taxon>
        <taxon>Craniata</taxon>
        <taxon>Vertebrata</taxon>
        <taxon>Euteleostomi</taxon>
        <taxon>Mammalia</taxon>
        <taxon>Eutheria</taxon>
        <taxon>Euarchontoglires</taxon>
        <taxon>Glires</taxon>
        <taxon>Rodentia</taxon>
        <taxon>Myomorpha</taxon>
        <taxon>Muroidea</taxon>
        <taxon>Muridae</taxon>
        <taxon>Murinae</taxon>
        <taxon>Mus</taxon>
        <taxon>Mus</taxon>
    </lineage>
</organism>
<proteinExistence type="evidence at protein level"/>
<accession>Q91ZR1</accession>
<comment type="function">
    <text evidence="3 5">The small GTPases Rab are key regulators of intracellular membrane trafficking, from the formation of transport vesicles to their fusion with membranes. Rabs cycle between an inactive GDP-bound form and an active GTP-bound form that is able to recruit to membranes different set of downstream effectors directly responsible for vesicle formation, movement, tethering and fusion (PubMed:14697203). RAB4B mediates endosomal tethering and fusion through the interaction with RUFY1 and RAB14 (By similarity). Acts as a regulator of platelet alpha-granule release during activation and aggregation of platelets (PubMed:14697203).</text>
</comment>
<comment type="catalytic activity">
    <reaction evidence="2">
        <text>GTP + H2O = GDP + phosphate + H(+)</text>
        <dbReference type="Rhea" id="RHEA:19669"/>
        <dbReference type="ChEBI" id="CHEBI:15377"/>
        <dbReference type="ChEBI" id="CHEBI:15378"/>
        <dbReference type="ChEBI" id="CHEBI:37565"/>
        <dbReference type="ChEBI" id="CHEBI:43474"/>
        <dbReference type="ChEBI" id="CHEBI:58189"/>
        <dbReference type="EC" id="3.6.5.2"/>
    </reaction>
    <physiologicalReaction direction="left-to-right" evidence="2">
        <dbReference type="Rhea" id="RHEA:19670"/>
    </physiologicalReaction>
</comment>
<comment type="cofactor">
    <cofactor evidence="3">
        <name>Mg(2+)</name>
        <dbReference type="ChEBI" id="CHEBI:18420"/>
    </cofactor>
</comment>
<comment type="activity regulation">
    <text evidence="6">Regulated by guanine nucleotide exchange factors (GEFs) which promote the exchange of bound GDP for free GTP. Regulated by GTPase activating proteins (GAPs) which increase the GTP hydrolysis activity. Inhibited by GDP dissociation inhibitors (GDIs).</text>
</comment>
<comment type="subunit">
    <text evidence="3">Interacts (GTP-bound form) with RUFY1; the interaction allows endosomal tethering and fusion.</text>
</comment>
<comment type="subcellular location">
    <subcellularLocation>
        <location evidence="3">Cell membrane</location>
        <topology evidence="3">Lipid-anchor</topology>
        <orientation evidence="3">Cytoplasmic side</orientation>
    </subcellularLocation>
    <subcellularLocation>
        <location evidence="3">Early endosome membrane</location>
        <topology evidence="3">Lipid-anchor</topology>
        <orientation evidence="3">Cytoplasmic side</orientation>
    </subcellularLocation>
</comment>
<comment type="domain">
    <text evidence="4">Switch 1, switch 2 and the interswitch regions are characteristic of Rab GTPases and mediate the interactions with Rab downstream effectors. The switch regions undergo conformational changes upon nucleotide binding which drives interaction with specific sets of effector proteins, with most effectors only binding to GTP-bound Rab.</text>
</comment>
<comment type="PTM">
    <text evidence="5">Serotonylation of Gln-67 by TGM2 during activation and aggregation of platelets leads to constitutive activation of GTPase activity.</text>
</comment>
<comment type="similarity">
    <text evidence="6">Belongs to the small GTPase superfamily. Rab family.</text>
</comment>
<reference key="1">
    <citation type="submission" date="2001-08" db="EMBL/GenBank/DDBJ databases">
        <title>Mus musculus GTP-binding protein (RAB4) mRNA.</title>
        <authorList>
            <person name="Zhou M."/>
            <person name="Raschke W.C."/>
        </authorList>
    </citation>
    <scope>NUCLEOTIDE SEQUENCE [MRNA]</scope>
</reference>
<reference key="2">
    <citation type="journal article" date="2005" name="Science">
        <title>The transcriptional landscape of the mammalian genome.</title>
        <authorList>
            <person name="Carninci P."/>
            <person name="Kasukawa T."/>
            <person name="Katayama S."/>
            <person name="Gough J."/>
            <person name="Frith M.C."/>
            <person name="Maeda N."/>
            <person name="Oyama R."/>
            <person name="Ravasi T."/>
            <person name="Lenhard B."/>
            <person name="Wells C."/>
            <person name="Kodzius R."/>
            <person name="Shimokawa K."/>
            <person name="Bajic V.B."/>
            <person name="Brenner S.E."/>
            <person name="Batalov S."/>
            <person name="Forrest A.R."/>
            <person name="Zavolan M."/>
            <person name="Davis M.J."/>
            <person name="Wilming L.G."/>
            <person name="Aidinis V."/>
            <person name="Allen J.E."/>
            <person name="Ambesi-Impiombato A."/>
            <person name="Apweiler R."/>
            <person name="Aturaliya R.N."/>
            <person name="Bailey T.L."/>
            <person name="Bansal M."/>
            <person name="Baxter L."/>
            <person name="Beisel K.W."/>
            <person name="Bersano T."/>
            <person name="Bono H."/>
            <person name="Chalk A.M."/>
            <person name="Chiu K.P."/>
            <person name="Choudhary V."/>
            <person name="Christoffels A."/>
            <person name="Clutterbuck D.R."/>
            <person name="Crowe M.L."/>
            <person name="Dalla E."/>
            <person name="Dalrymple B.P."/>
            <person name="de Bono B."/>
            <person name="Della Gatta G."/>
            <person name="di Bernardo D."/>
            <person name="Down T."/>
            <person name="Engstrom P."/>
            <person name="Fagiolini M."/>
            <person name="Faulkner G."/>
            <person name="Fletcher C.F."/>
            <person name="Fukushima T."/>
            <person name="Furuno M."/>
            <person name="Futaki S."/>
            <person name="Gariboldi M."/>
            <person name="Georgii-Hemming P."/>
            <person name="Gingeras T.R."/>
            <person name="Gojobori T."/>
            <person name="Green R.E."/>
            <person name="Gustincich S."/>
            <person name="Harbers M."/>
            <person name="Hayashi Y."/>
            <person name="Hensch T.K."/>
            <person name="Hirokawa N."/>
            <person name="Hill D."/>
            <person name="Huminiecki L."/>
            <person name="Iacono M."/>
            <person name="Ikeo K."/>
            <person name="Iwama A."/>
            <person name="Ishikawa T."/>
            <person name="Jakt M."/>
            <person name="Kanapin A."/>
            <person name="Katoh M."/>
            <person name="Kawasawa Y."/>
            <person name="Kelso J."/>
            <person name="Kitamura H."/>
            <person name="Kitano H."/>
            <person name="Kollias G."/>
            <person name="Krishnan S.P."/>
            <person name="Kruger A."/>
            <person name="Kummerfeld S.K."/>
            <person name="Kurochkin I.V."/>
            <person name="Lareau L.F."/>
            <person name="Lazarevic D."/>
            <person name="Lipovich L."/>
            <person name="Liu J."/>
            <person name="Liuni S."/>
            <person name="McWilliam S."/>
            <person name="Madan Babu M."/>
            <person name="Madera M."/>
            <person name="Marchionni L."/>
            <person name="Matsuda H."/>
            <person name="Matsuzawa S."/>
            <person name="Miki H."/>
            <person name="Mignone F."/>
            <person name="Miyake S."/>
            <person name="Morris K."/>
            <person name="Mottagui-Tabar S."/>
            <person name="Mulder N."/>
            <person name="Nakano N."/>
            <person name="Nakauchi H."/>
            <person name="Ng P."/>
            <person name="Nilsson R."/>
            <person name="Nishiguchi S."/>
            <person name="Nishikawa S."/>
            <person name="Nori F."/>
            <person name="Ohara O."/>
            <person name="Okazaki Y."/>
            <person name="Orlando V."/>
            <person name="Pang K.C."/>
            <person name="Pavan W.J."/>
            <person name="Pavesi G."/>
            <person name="Pesole G."/>
            <person name="Petrovsky N."/>
            <person name="Piazza S."/>
            <person name="Reed J."/>
            <person name="Reid J.F."/>
            <person name="Ring B.Z."/>
            <person name="Ringwald M."/>
            <person name="Rost B."/>
            <person name="Ruan Y."/>
            <person name="Salzberg S.L."/>
            <person name="Sandelin A."/>
            <person name="Schneider C."/>
            <person name="Schoenbach C."/>
            <person name="Sekiguchi K."/>
            <person name="Semple C.A."/>
            <person name="Seno S."/>
            <person name="Sessa L."/>
            <person name="Sheng Y."/>
            <person name="Shibata Y."/>
            <person name="Shimada H."/>
            <person name="Shimada K."/>
            <person name="Silva D."/>
            <person name="Sinclair B."/>
            <person name="Sperling S."/>
            <person name="Stupka E."/>
            <person name="Sugiura K."/>
            <person name="Sultana R."/>
            <person name="Takenaka Y."/>
            <person name="Taki K."/>
            <person name="Tammoja K."/>
            <person name="Tan S.L."/>
            <person name="Tang S."/>
            <person name="Taylor M.S."/>
            <person name="Tegner J."/>
            <person name="Teichmann S.A."/>
            <person name="Ueda H.R."/>
            <person name="van Nimwegen E."/>
            <person name="Verardo R."/>
            <person name="Wei C.L."/>
            <person name="Yagi K."/>
            <person name="Yamanishi H."/>
            <person name="Zabarovsky E."/>
            <person name="Zhu S."/>
            <person name="Zimmer A."/>
            <person name="Hide W."/>
            <person name="Bult C."/>
            <person name="Grimmond S.M."/>
            <person name="Teasdale R.D."/>
            <person name="Liu E.T."/>
            <person name="Brusic V."/>
            <person name="Quackenbush J."/>
            <person name="Wahlestedt C."/>
            <person name="Mattick J.S."/>
            <person name="Hume D.A."/>
            <person name="Kai C."/>
            <person name="Sasaki D."/>
            <person name="Tomaru Y."/>
            <person name="Fukuda S."/>
            <person name="Kanamori-Katayama M."/>
            <person name="Suzuki M."/>
            <person name="Aoki J."/>
            <person name="Arakawa T."/>
            <person name="Iida J."/>
            <person name="Imamura K."/>
            <person name="Itoh M."/>
            <person name="Kato T."/>
            <person name="Kawaji H."/>
            <person name="Kawagashira N."/>
            <person name="Kawashima T."/>
            <person name="Kojima M."/>
            <person name="Kondo S."/>
            <person name="Konno H."/>
            <person name="Nakano K."/>
            <person name="Ninomiya N."/>
            <person name="Nishio T."/>
            <person name="Okada M."/>
            <person name="Plessy C."/>
            <person name="Shibata K."/>
            <person name="Shiraki T."/>
            <person name="Suzuki S."/>
            <person name="Tagami M."/>
            <person name="Waki K."/>
            <person name="Watahiki A."/>
            <person name="Okamura-Oho Y."/>
            <person name="Suzuki H."/>
            <person name="Kawai J."/>
            <person name="Hayashizaki Y."/>
        </authorList>
    </citation>
    <scope>NUCLEOTIDE SEQUENCE [LARGE SCALE MRNA]</scope>
    <source>
        <strain>C57BL/6J</strain>
        <tissue>Cerebellum</tissue>
    </source>
</reference>
<reference key="3">
    <citation type="journal article" date="2004" name="Genome Res.">
        <title>The status, quality, and expansion of the NIH full-length cDNA project: the Mammalian Gene Collection (MGC).</title>
        <authorList>
            <consortium name="The MGC Project Team"/>
        </authorList>
    </citation>
    <scope>NUCLEOTIDE SEQUENCE [LARGE SCALE MRNA]</scope>
    <source>
        <strain>FVB/N</strain>
        <tissue>Mammary tumor</tissue>
    </source>
</reference>
<reference key="4">
    <citation type="journal article" date="2003" name="Cell">
        <title>Serotonylation of small GTPases is a signal transduction pathway that triggers platelet alpha-granule release.</title>
        <authorList>
            <person name="Walther D.J."/>
            <person name="Peter J.U."/>
            <person name="Winter S."/>
            <person name="Hoeltje M."/>
            <person name="Paulmann N."/>
            <person name="Grohmann M."/>
            <person name="Vowinckel J."/>
            <person name="Alamo-Bethencourt V."/>
            <person name="Wilhelm C.S."/>
            <person name="Ahnert-Hilger G."/>
            <person name="Bader M."/>
        </authorList>
    </citation>
    <scope>FUNCTION</scope>
    <scope>SEROTONYLATION AT GLN-67</scope>
</reference>
<reference key="5">
    <citation type="journal article" date="2010" name="Cell">
        <title>A tissue-specific atlas of mouse protein phosphorylation and expression.</title>
        <authorList>
            <person name="Huttlin E.L."/>
            <person name="Jedrychowski M.P."/>
            <person name="Elias J.E."/>
            <person name="Goswami T."/>
            <person name="Rad R."/>
            <person name="Beausoleil S.A."/>
            <person name="Villen J."/>
            <person name="Haas W."/>
            <person name="Sowa M.E."/>
            <person name="Gygi S.P."/>
        </authorList>
    </citation>
    <scope>IDENTIFICATION BY MASS SPECTROMETRY [LARGE SCALE ANALYSIS]</scope>
    <source>
        <tissue>Brain</tissue>
        <tissue>Brown adipose tissue</tissue>
        <tissue>Kidney</tissue>
        <tissue>Liver</tissue>
        <tissue>Lung</tissue>
        <tissue>Pancreas</tissue>
        <tissue>Spleen</tissue>
        <tissue>Testis</tissue>
    </source>
</reference>